<sequence length="407" mass="42811">MSAVPLRNNKAIAADVRSITVLGATGSIGDSTMDLLRGAPERYRVEALTGNSNIEGLAKLAREFNSRFVAVADPARLGELREALAGTGIACGAGESAIIEAAARPADWVMAAVSGAAGLKPALAAVDRGATVALANKECLVCAGDFFMQRAAQAGACILPADSEHNALFQALSSGNREELVRVIITASGGPFRTWAPQDIEQATLEQALKHPNWSMGQKITIDSASMMNKGLEVIEASYLFALSPDEIDVLVHPQSIVHGMVEFSDRSVVAQLGAPDMRIPIAHCLGWPERIKGPSARLDLAKIGTLTFEAPDFERFPGLRLAYDSLRAGRGATTVFNAANEVAVAAFIGGHIRFGAIARLVEATLNDWTRSGNQAPLSSADDAIAIDHDARKRAAGLLPQIAAKAS</sequence>
<feature type="chain" id="PRO_1000020222" description="1-deoxy-D-xylulose 5-phosphate reductoisomerase">
    <location>
        <begin position="1"/>
        <end position="407"/>
    </location>
</feature>
<feature type="binding site" evidence="1">
    <location>
        <position position="25"/>
    </location>
    <ligand>
        <name>NADPH</name>
        <dbReference type="ChEBI" id="CHEBI:57783"/>
    </ligand>
</feature>
<feature type="binding site" evidence="1">
    <location>
        <position position="26"/>
    </location>
    <ligand>
        <name>NADPH</name>
        <dbReference type="ChEBI" id="CHEBI:57783"/>
    </ligand>
</feature>
<feature type="binding site" evidence="1">
    <location>
        <position position="27"/>
    </location>
    <ligand>
        <name>NADPH</name>
        <dbReference type="ChEBI" id="CHEBI:57783"/>
    </ligand>
</feature>
<feature type="binding site" evidence="1">
    <location>
        <position position="28"/>
    </location>
    <ligand>
        <name>NADPH</name>
        <dbReference type="ChEBI" id="CHEBI:57783"/>
    </ligand>
</feature>
<feature type="binding site" evidence="1">
    <location>
        <position position="53"/>
    </location>
    <ligand>
        <name>NADPH</name>
        <dbReference type="ChEBI" id="CHEBI:57783"/>
    </ligand>
</feature>
<feature type="binding site" evidence="1">
    <location>
        <position position="136"/>
    </location>
    <ligand>
        <name>NADPH</name>
        <dbReference type="ChEBI" id="CHEBI:57783"/>
    </ligand>
</feature>
<feature type="binding site" evidence="1">
    <location>
        <position position="137"/>
    </location>
    <ligand>
        <name>1-deoxy-D-xylulose 5-phosphate</name>
        <dbReference type="ChEBI" id="CHEBI:57792"/>
    </ligand>
</feature>
<feature type="binding site" evidence="1">
    <location>
        <position position="138"/>
    </location>
    <ligand>
        <name>NADPH</name>
        <dbReference type="ChEBI" id="CHEBI:57783"/>
    </ligand>
</feature>
<feature type="binding site" evidence="1">
    <location>
        <position position="162"/>
    </location>
    <ligand>
        <name>Mn(2+)</name>
        <dbReference type="ChEBI" id="CHEBI:29035"/>
    </ligand>
</feature>
<feature type="binding site" evidence="1">
    <location>
        <position position="163"/>
    </location>
    <ligand>
        <name>1-deoxy-D-xylulose 5-phosphate</name>
        <dbReference type="ChEBI" id="CHEBI:57792"/>
    </ligand>
</feature>
<feature type="binding site" evidence="1">
    <location>
        <position position="164"/>
    </location>
    <ligand>
        <name>1-deoxy-D-xylulose 5-phosphate</name>
        <dbReference type="ChEBI" id="CHEBI:57792"/>
    </ligand>
</feature>
<feature type="binding site" evidence="1">
    <location>
        <position position="164"/>
    </location>
    <ligand>
        <name>Mn(2+)</name>
        <dbReference type="ChEBI" id="CHEBI:29035"/>
    </ligand>
</feature>
<feature type="binding site" evidence="1">
    <location>
        <position position="188"/>
    </location>
    <ligand>
        <name>1-deoxy-D-xylulose 5-phosphate</name>
        <dbReference type="ChEBI" id="CHEBI:57792"/>
    </ligand>
</feature>
<feature type="binding site" evidence="1">
    <location>
        <position position="211"/>
    </location>
    <ligand>
        <name>1-deoxy-D-xylulose 5-phosphate</name>
        <dbReference type="ChEBI" id="CHEBI:57792"/>
    </ligand>
</feature>
<feature type="binding site" evidence="1">
    <location>
        <position position="217"/>
    </location>
    <ligand>
        <name>NADPH</name>
        <dbReference type="ChEBI" id="CHEBI:57783"/>
    </ligand>
</feature>
<feature type="binding site" evidence="1">
    <location>
        <position position="224"/>
    </location>
    <ligand>
        <name>1-deoxy-D-xylulose 5-phosphate</name>
        <dbReference type="ChEBI" id="CHEBI:57792"/>
    </ligand>
</feature>
<feature type="binding site" evidence="1">
    <location>
        <position position="229"/>
    </location>
    <ligand>
        <name>1-deoxy-D-xylulose 5-phosphate</name>
        <dbReference type="ChEBI" id="CHEBI:57792"/>
    </ligand>
</feature>
<feature type="binding site" evidence="1">
    <location>
        <position position="230"/>
    </location>
    <ligand>
        <name>1-deoxy-D-xylulose 5-phosphate</name>
        <dbReference type="ChEBI" id="CHEBI:57792"/>
    </ligand>
</feature>
<feature type="binding site" evidence="1">
    <location>
        <position position="233"/>
    </location>
    <ligand>
        <name>1-deoxy-D-xylulose 5-phosphate</name>
        <dbReference type="ChEBI" id="CHEBI:57792"/>
    </ligand>
</feature>
<feature type="binding site" evidence="1">
    <location>
        <position position="233"/>
    </location>
    <ligand>
        <name>Mn(2+)</name>
        <dbReference type="ChEBI" id="CHEBI:29035"/>
    </ligand>
</feature>
<organism>
    <name type="scientific">Bradyrhizobium sp. (strain ORS 278)</name>
    <dbReference type="NCBI Taxonomy" id="114615"/>
    <lineage>
        <taxon>Bacteria</taxon>
        <taxon>Pseudomonadati</taxon>
        <taxon>Pseudomonadota</taxon>
        <taxon>Alphaproteobacteria</taxon>
        <taxon>Hyphomicrobiales</taxon>
        <taxon>Nitrobacteraceae</taxon>
        <taxon>Bradyrhizobium</taxon>
    </lineage>
</organism>
<reference key="1">
    <citation type="journal article" date="2007" name="Science">
        <title>Legumes symbioses: absence of nod genes in photosynthetic bradyrhizobia.</title>
        <authorList>
            <person name="Giraud E."/>
            <person name="Moulin L."/>
            <person name="Vallenet D."/>
            <person name="Barbe V."/>
            <person name="Cytryn E."/>
            <person name="Avarre J.-C."/>
            <person name="Jaubert M."/>
            <person name="Simon D."/>
            <person name="Cartieaux F."/>
            <person name="Prin Y."/>
            <person name="Bena G."/>
            <person name="Hannibal L."/>
            <person name="Fardoux J."/>
            <person name="Kojadinovic M."/>
            <person name="Vuillet L."/>
            <person name="Lajus A."/>
            <person name="Cruveiller S."/>
            <person name="Rouy Z."/>
            <person name="Mangenot S."/>
            <person name="Segurens B."/>
            <person name="Dossat C."/>
            <person name="Franck W.L."/>
            <person name="Chang W.-S."/>
            <person name="Saunders E."/>
            <person name="Bruce D."/>
            <person name="Richardson P."/>
            <person name="Normand P."/>
            <person name="Dreyfus B."/>
            <person name="Pignol D."/>
            <person name="Stacey G."/>
            <person name="Emerich D."/>
            <person name="Vermeglio A."/>
            <person name="Medigue C."/>
            <person name="Sadowsky M."/>
        </authorList>
    </citation>
    <scope>NUCLEOTIDE SEQUENCE [LARGE SCALE GENOMIC DNA]</scope>
    <source>
        <strain>ORS 278</strain>
    </source>
</reference>
<keyword id="KW-0414">Isoprene biosynthesis</keyword>
<keyword id="KW-0464">Manganese</keyword>
<keyword id="KW-0479">Metal-binding</keyword>
<keyword id="KW-0521">NADP</keyword>
<keyword id="KW-0560">Oxidoreductase</keyword>
<keyword id="KW-1185">Reference proteome</keyword>
<comment type="function">
    <text evidence="1">Catalyzes the NADPH-dependent rearrangement and reduction of 1-deoxy-D-xylulose-5-phosphate (DXP) to 2-C-methyl-D-erythritol 4-phosphate (MEP).</text>
</comment>
<comment type="catalytic activity">
    <reaction evidence="1">
        <text>2-C-methyl-D-erythritol 4-phosphate + NADP(+) = 1-deoxy-D-xylulose 5-phosphate + NADPH + H(+)</text>
        <dbReference type="Rhea" id="RHEA:13717"/>
        <dbReference type="ChEBI" id="CHEBI:15378"/>
        <dbReference type="ChEBI" id="CHEBI:57783"/>
        <dbReference type="ChEBI" id="CHEBI:57792"/>
        <dbReference type="ChEBI" id="CHEBI:58262"/>
        <dbReference type="ChEBI" id="CHEBI:58349"/>
        <dbReference type="EC" id="1.1.1.267"/>
    </reaction>
    <physiologicalReaction direction="right-to-left" evidence="1">
        <dbReference type="Rhea" id="RHEA:13719"/>
    </physiologicalReaction>
</comment>
<comment type="cofactor">
    <cofactor evidence="1">
        <name>Mg(2+)</name>
        <dbReference type="ChEBI" id="CHEBI:18420"/>
    </cofactor>
    <cofactor evidence="1">
        <name>Mn(2+)</name>
        <dbReference type="ChEBI" id="CHEBI:29035"/>
    </cofactor>
</comment>
<comment type="pathway">
    <text evidence="1">Isoprenoid biosynthesis; isopentenyl diphosphate biosynthesis via DXP pathway; isopentenyl diphosphate from 1-deoxy-D-xylulose 5-phosphate: step 1/6.</text>
</comment>
<comment type="similarity">
    <text evidence="1">Belongs to the DXR family.</text>
</comment>
<accession>A4YVG0</accession>
<dbReference type="EC" id="1.1.1.267" evidence="1"/>
<dbReference type="EMBL" id="CU234118">
    <property type="protein sequence ID" value="CAL77886.1"/>
    <property type="molecule type" value="Genomic_DNA"/>
</dbReference>
<dbReference type="RefSeq" id="WP_011927014.1">
    <property type="nucleotide sequence ID" value="NC_009445.1"/>
</dbReference>
<dbReference type="SMR" id="A4YVG0"/>
<dbReference type="STRING" id="114615.BRADO4134"/>
<dbReference type="KEGG" id="bra:BRADO4134"/>
<dbReference type="eggNOG" id="COG0743">
    <property type="taxonomic scope" value="Bacteria"/>
</dbReference>
<dbReference type="HOGENOM" id="CLU_035714_0_1_5"/>
<dbReference type="OrthoDB" id="9806546at2"/>
<dbReference type="UniPathway" id="UPA00056">
    <property type="reaction ID" value="UER00092"/>
</dbReference>
<dbReference type="Proteomes" id="UP000001994">
    <property type="component" value="Chromosome"/>
</dbReference>
<dbReference type="GO" id="GO:0030604">
    <property type="term" value="F:1-deoxy-D-xylulose-5-phosphate reductoisomerase activity"/>
    <property type="evidence" value="ECO:0007669"/>
    <property type="project" value="UniProtKB-UniRule"/>
</dbReference>
<dbReference type="GO" id="GO:0030145">
    <property type="term" value="F:manganese ion binding"/>
    <property type="evidence" value="ECO:0007669"/>
    <property type="project" value="TreeGrafter"/>
</dbReference>
<dbReference type="GO" id="GO:0070402">
    <property type="term" value="F:NADPH binding"/>
    <property type="evidence" value="ECO:0007669"/>
    <property type="project" value="InterPro"/>
</dbReference>
<dbReference type="GO" id="GO:0051484">
    <property type="term" value="P:isopentenyl diphosphate biosynthetic process, methylerythritol 4-phosphate pathway involved in terpenoid biosynthetic process"/>
    <property type="evidence" value="ECO:0007669"/>
    <property type="project" value="TreeGrafter"/>
</dbReference>
<dbReference type="FunFam" id="3.40.50.720:FF:000045">
    <property type="entry name" value="1-deoxy-D-xylulose 5-phosphate reductoisomerase"/>
    <property type="match status" value="1"/>
</dbReference>
<dbReference type="Gene3D" id="1.10.1740.10">
    <property type="match status" value="1"/>
</dbReference>
<dbReference type="Gene3D" id="3.40.50.720">
    <property type="entry name" value="NAD(P)-binding Rossmann-like Domain"/>
    <property type="match status" value="1"/>
</dbReference>
<dbReference type="HAMAP" id="MF_00183">
    <property type="entry name" value="DXP_reductoisom"/>
    <property type="match status" value="1"/>
</dbReference>
<dbReference type="InterPro" id="IPR003821">
    <property type="entry name" value="DXP_reductoisomerase"/>
</dbReference>
<dbReference type="InterPro" id="IPR013644">
    <property type="entry name" value="DXP_reductoisomerase_C"/>
</dbReference>
<dbReference type="InterPro" id="IPR013512">
    <property type="entry name" value="DXP_reductoisomerase_N"/>
</dbReference>
<dbReference type="InterPro" id="IPR026877">
    <property type="entry name" value="DXPR_C"/>
</dbReference>
<dbReference type="InterPro" id="IPR036169">
    <property type="entry name" value="DXPR_C_sf"/>
</dbReference>
<dbReference type="InterPro" id="IPR036291">
    <property type="entry name" value="NAD(P)-bd_dom_sf"/>
</dbReference>
<dbReference type="NCBIfam" id="TIGR00243">
    <property type="entry name" value="Dxr"/>
    <property type="match status" value="1"/>
</dbReference>
<dbReference type="PANTHER" id="PTHR30525">
    <property type="entry name" value="1-DEOXY-D-XYLULOSE 5-PHOSPHATE REDUCTOISOMERASE"/>
    <property type="match status" value="1"/>
</dbReference>
<dbReference type="PANTHER" id="PTHR30525:SF0">
    <property type="entry name" value="1-DEOXY-D-XYLULOSE 5-PHOSPHATE REDUCTOISOMERASE, CHLOROPLASTIC"/>
    <property type="match status" value="1"/>
</dbReference>
<dbReference type="Pfam" id="PF08436">
    <property type="entry name" value="DXP_redisom_C"/>
    <property type="match status" value="1"/>
</dbReference>
<dbReference type="Pfam" id="PF02670">
    <property type="entry name" value="DXP_reductoisom"/>
    <property type="match status" value="1"/>
</dbReference>
<dbReference type="Pfam" id="PF13288">
    <property type="entry name" value="DXPR_C"/>
    <property type="match status" value="1"/>
</dbReference>
<dbReference type="PIRSF" id="PIRSF006205">
    <property type="entry name" value="Dxp_reductismrs"/>
    <property type="match status" value="1"/>
</dbReference>
<dbReference type="SUPFAM" id="SSF69055">
    <property type="entry name" value="1-deoxy-D-xylulose-5-phosphate reductoisomerase, C-terminal domain"/>
    <property type="match status" value="1"/>
</dbReference>
<dbReference type="SUPFAM" id="SSF55347">
    <property type="entry name" value="Glyceraldehyde-3-phosphate dehydrogenase-like, C-terminal domain"/>
    <property type="match status" value="1"/>
</dbReference>
<dbReference type="SUPFAM" id="SSF51735">
    <property type="entry name" value="NAD(P)-binding Rossmann-fold domains"/>
    <property type="match status" value="1"/>
</dbReference>
<proteinExistence type="inferred from homology"/>
<gene>
    <name evidence="1" type="primary">dxr</name>
    <name type="ordered locus">BRADO4134</name>
</gene>
<name>DXR_BRASO</name>
<protein>
    <recommendedName>
        <fullName evidence="1">1-deoxy-D-xylulose 5-phosphate reductoisomerase</fullName>
        <shortName evidence="1">DXP reductoisomerase</shortName>
        <ecNumber evidence="1">1.1.1.267</ecNumber>
    </recommendedName>
    <alternativeName>
        <fullName evidence="1">1-deoxyxylulose-5-phosphate reductoisomerase</fullName>
    </alternativeName>
    <alternativeName>
        <fullName evidence="1">2-C-methyl-D-erythritol 4-phosphate synthase</fullName>
    </alternativeName>
</protein>
<evidence type="ECO:0000255" key="1">
    <source>
        <dbReference type="HAMAP-Rule" id="MF_00183"/>
    </source>
</evidence>